<organism>
    <name type="scientific">Cereibacter sphaeroides (strain ATCC 17029 / ATH 2.4.9)</name>
    <name type="common">Rhodobacter sphaeroides</name>
    <dbReference type="NCBI Taxonomy" id="349101"/>
    <lineage>
        <taxon>Bacteria</taxon>
        <taxon>Pseudomonadati</taxon>
        <taxon>Pseudomonadota</taxon>
        <taxon>Alphaproteobacteria</taxon>
        <taxon>Rhodobacterales</taxon>
        <taxon>Paracoccaceae</taxon>
        <taxon>Cereibacter</taxon>
    </lineage>
</organism>
<dbReference type="EC" id="5.3.1.16" evidence="1"/>
<dbReference type="EMBL" id="CP000577">
    <property type="protein sequence ID" value="ABN76029.1"/>
    <property type="molecule type" value="Genomic_DNA"/>
</dbReference>
<dbReference type="RefSeq" id="WP_009566362.1">
    <property type="nucleotide sequence ID" value="NC_009049.1"/>
</dbReference>
<dbReference type="SMR" id="A3PI63"/>
<dbReference type="GeneID" id="67446015"/>
<dbReference type="KEGG" id="rsh:Rsph17029_0918"/>
<dbReference type="HOGENOM" id="CLU_048577_1_1_5"/>
<dbReference type="UniPathway" id="UPA00031">
    <property type="reaction ID" value="UER00009"/>
</dbReference>
<dbReference type="GO" id="GO:0005737">
    <property type="term" value="C:cytoplasm"/>
    <property type="evidence" value="ECO:0007669"/>
    <property type="project" value="UniProtKB-SubCell"/>
</dbReference>
<dbReference type="GO" id="GO:0003949">
    <property type="term" value="F:1-(5-phosphoribosyl)-5-[(5-phosphoribosylamino)methylideneamino]imidazole-4-carboxamide isomerase activity"/>
    <property type="evidence" value="ECO:0007669"/>
    <property type="project" value="UniProtKB-UniRule"/>
</dbReference>
<dbReference type="GO" id="GO:0000105">
    <property type="term" value="P:L-histidine biosynthetic process"/>
    <property type="evidence" value="ECO:0007669"/>
    <property type="project" value="UniProtKB-UniRule"/>
</dbReference>
<dbReference type="GO" id="GO:0000162">
    <property type="term" value="P:L-tryptophan biosynthetic process"/>
    <property type="evidence" value="ECO:0007669"/>
    <property type="project" value="TreeGrafter"/>
</dbReference>
<dbReference type="CDD" id="cd04732">
    <property type="entry name" value="HisA"/>
    <property type="match status" value="1"/>
</dbReference>
<dbReference type="FunFam" id="3.20.20.70:FF:000009">
    <property type="entry name" value="1-(5-phosphoribosyl)-5-[(5-phosphoribosylamino)methylideneamino] imidazole-4-carboxamide isomerase"/>
    <property type="match status" value="1"/>
</dbReference>
<dbReference type="Gene3D" id="3.20.20.70">
    <property type="entry name" value="Aldolase class I"/>
    <property type="match status" value="1"/>
</dbReference>
<dbReference type="HAMAP" id="MF_01014">
    <property type="entry name" value="HisA"/>
    <property type="match status" value="1"/>
</dbReference>
<dbReference type="InterPro" id="IPR013785">
    <property type="entry name" value="Aldolase_TIM"/>
</dbReference>
<dbReference type="InterPro" id="IPR006062">
    <property type="entry name" value="His_biosynth"/>
</dbReference>
<dbReference type="InterPro" id="IPR006063">
    <property type="entry name" value="HisA_bact_arch"/>
</dbReference>
<dbReference type="InterPro" id="IPR044524">
    <property type="entry name" value="Isoase_HisA-like"/>
</dbReference>
<dbReference type="InterPro" id="IPR023016">
    <property type="entry name" value="Isoase_HisA-like_bact"/>
</dbReference>
<dbReference type="InterPro" id="IPR011060">
    <property type="entry name" value="RibuloseP-bd_barrel"/>
</dbReference>
<dbReference type="NCBIfam" id="TIGR00007">
    <property type="entry name" value="1-(5-phosphoribosyl)-5-[(5-phosphoribosylamino)methylideneamino]imidazole-4-carboxamide isomerase"/>
    <property type="match status" value="1"/>
</dbReference>
<dbReference type="PANTHER" id="PTHR43090">
    <property type="entry name" value="1-(5-PHOSPHORIBOSYL)-5-[(5-PHOSPHORIBOSYLAMINO)METHYLIDENEAMINO] IMIDAZOLE-4-CARBOXAMIDE ISOMERASE"/>
    <property type="match status" value="1"/>
</dbReference>
<dbReference type="PANTHER" id="PTHR43090:SF2">
    <property type="entry name" value="1-(5-PHOSPHORIBOSYL)-5-[(5-PHOSPHORIBOSYLAMINO)METHYLIDENEAMINO] IMIDAZOLE-4-CARBOXAMIDE ISOMERASE"/>
    <property type="match status" value="1"/>
</dbReference>
<dbReference type="Pfam" id="PF00977">
    <property type="entry name" value="His_biosynth"/>
    <property type="match status" value="1"/>
</dbReference>
<dbReference type="SUPFAM" id="SSF51366">
    <property type="entry name" value="Ribulose-phoshate binding barrel"/>
    <property type="match status" value="1"/>
</dbReference>
<name>HIS4_CERS1</name>
<protein>
    <recommendedName>
        <fullName evidence="1">1-(5-phosphoribosyl)-5-[(5-phosphoribosylamino)methylideneamino] imidazole-4-carboxamide isomerase</fullName>
        <ecNumber evidence="1">5.3.1.16</ecNumber>
    </recommendedName>
    <alternativeName>
        <fullName evidence="1">Phosphoribosylformimino-5-aminoimidazole carboxamide ribotide isomerase</fullName>
    </alternativeName>
</protein>
<feature type="chain" id="PRO_0000290521" description="1-(5-phosphoribosyl)-5-[(5-phosphoribosylamino)methylideneamino] imidazole-4-carboxamide isomerase">
    <location>
        <begin position="1"/>
        <end position="239"/>
    </location>
</feature>
<feature type="active site" description="Proton acceptor" evidence="1">
    <location>
        <position position="8"/>
    </location>
</feature>
<feature type="active site" description="Proton donor" evidence="1">
    <location>
        <position position="129"/>
    </location>
</feature>
<gene>
    <name evidence="1" type="primary">hisA</name>
    <name type="ordered locus">Rsph17029_0918</name>
</gene>
<sequence length="239" mass="24548">MILYPAIDLKDGQCVRLLRGEMEAATVFGDDPAAQAAAFEAAGCEWVHLVDLNGAFAGRPVNAAAVEAILARIAVPAQLGGGIRDMATIALWLEKGLARVILGTVAVENPGLVREAARAFPGRVAVGIDARKGRVATKGWATETDVMATDLARSFEDAGVAAIIYTDIDRDGAMAGPNIEATDALARAVSIPVIASGGVSSLADLLALRDTGSIAGAISGRALYDGALDLTQALQALRT</sequence>
<reference key="1">
    <citation type="submission" date="2007-02" db="EMBL/GenBank/DDBJ databases">
        <title>Complete sequence of chromosome 1 of Rhodobacter sphaeroides ATCC 17029.</title>
        <authorList>
            <person name="Copeland A."/>
            <person name="Lucas S."/>
            <person name="Lapidus A."/>
            <person name="Barry K."/>
            <person name="Detter J.C."/>
            <person name="Glavina del Rio T."/>
            <person name="Hammon N."/>
            <person name="Israni S."/>
            <person name="Dalin E."/>
            <person name="Tice H."/>
            <person name="Pitluck S."/>
            <person name="Kiss H."/>
            <person name="Brettin T."/>
            <person name="Bruce D."/>
            <person name="Han C."/>
            <person name="Tapia R."/>
            <person name="Gilna P."/>
            <person name="Schmutz J."/>
            <person name="Larimer F."/>
            <person name="Land M."/>
            <person name="Hauser L."/>
            <person name="Kyrpides N."/>
            <person name="Mikhailova N."/>
            <person name="Richardson P."/>
            <person name="Mackenzie C."/>
            <person name="Choudhary M."/>
            <person name="Donohue T.J."/>
            <person name="Kaplan S."/>
        </authorList>
    </citation>
    <scope>NUCLEOTIDE SEQUENCE [LARGE SCALE GENOMIC DNA]</scope>
    <source>
        <strain>ATCC 17029 / ATH 2.4.9</strain>
    </source>
</reference>
<evidence type="ECO:0000255" key="1">
    <source>
        <dbReference type="HAMAP-Rule" id="MF_01014"/>
    </source>
</evidence>
<proteinExistence type="inferred from homology"/>
<comment type="catalytic activity">
    <reaction evidence="1">
        <text>1-(5-phospho-beta-D-ribosyl)-5-[(5-phospho-beta-D-ribosylamino)methylideneamino]imidazole-4-carboxamide = 5-[(5-phospho-1-deoxy-D-ribulos-1-ylimino)methylamino]-1-(5-phospho-beta-D-ribosyl)imidazole-4-carboxamide</text>
        <dbReference type="Rhea" id="RHEA:15469"/>
        <dbReference type="ChEBI" id="CHEBI:58435"/>
        <dbReference type="ChEBI" id="CHEBI:58525"/>
        <dbReference type="EC" id="5.3.1.16"/>
    </reaction>
</comment>
<comment type="pathway">
    <text evidence="1">Amino-acid biosynthesis; L-histidine biosynthesis; L-histidine from 5-phospho-alpha-D-ribose 1-diphosphate: step 4/9.</text>
</comment>
<comment type="subcellular location">
    <subcellularLocation>
        <location evidence="1">Cytoplasm</location>
    </subcellularLocation>
</comment>
<comment type="similarity">
    <text evidence="1">Belongs to the HisA/HisF family.</text>
</comment>
<keyword id="KW-0028">Amino-acid biosynthesis</keyword>
<keyword id="KW-0963">Cytoplasm</keyword>
<keyword id="KW-0368">Histidine biosynthesis</keyword>
<keyword id="KW-0413">Isomerase</keyword>
<accession>A3PI63</accession>